<proteinExistence type="predicted"/>
<keyword id="KW-1185">Reference proteome</keyword>
<sequence length="201" mass="23340">MSYYFNYIGKKLKPRKSVTFSTETKVYEYPREPELTAQEKQKLLEEEEESDFSGFFVIDLTDSDNEIKEEEESEEEEKEISHGAKSTIKSILTNYRNKHGRNRNPRSRSIFKNAQRGYRRREITKIAKEEARVYWEGSDLLDSPDSELPTLPRFDFTPSEMESKRTGFGFTFDEHEEALHGILPGGCTGNTETVDQGLSKQ</sequence>
<reference key="1">
    <citation type="journal article" date="2005" name="J. Gen. Virol.">
        <title>A novel class of herpesvirus with bivalve hosts.</title>
        <authorList>
            <person name="Davison A.J."/>
            <person name="Trus B.L."/>
            <person name="Cheng N."/>
            <person name="Steven A.C."/>
            <person name="Watson M.S."/>
            <person name="Cunningham C."/>
            <person name="Le Deuff R.M."/>
            <person name="Renault T."/>
        </authorList>
    </citation>
    <scope>NUCLEOTIDE SEQUENCE [LARGE SCALE GENOMIC DNA]</scope>
</reference>
<name>Y029_OSHVF</name>
<evidence type="ECO:0000256" key="1">
    <source>
        <dbReference type="SAM" id="MobiDB-lite"/>
    </source>
</evidence>
<dbReference type="EMBL" id="AY509253">
    <property type="protein sequence ID" value="AAS00921.1"/>
    <property type="molecule type" value="Genomic_DNA"/>
</dbReference>
<dbReference type="RefSeq" id="YP_024574.1">
    <property type="nucleotide sequence ID" value="NC_005881.2"/>
</dbReference>
<dbReference type="KEGG" id="vg:2948147"/>
<dbReference type="Proteomes" id="UP000007021">
    <property type="component" value="Segment"/>
</dbReference>
<gene>
    <name type="ORF">ORF29</name>
</gene>
<accession>Q6R7J4</accession>
<protein>
    <recommendedName>
        <fullName>Uncharacterized protein ORF29</fullName>
    </recommendedName>
</protein>
<feature type="chain" id="PRO_0000385060" description="Uncharacterized protein ORF29">
    <location>
        <begin position="1"/>
        <end position="201"/>
    </location>
</feature>
<feature type="region of interest" description="Disordered" evidence="1">
    <location>
        <begin position="64"/>
        <end position="114"/>
    </location>
</feature>
<feature type="region of interest" description="Disordered" evidence="1">
    <location>
        <begin position="182"/>
        <end position="201"/>
    </location>
</feature>
<feature type="compositionally biased region" description="Acidic residues" evidence="1">
    <location>
        <begin position="64"/>
        <end position="78"/>
    </location>
</feature>
<feature type="compositionally biased region" description="Basic residues" evidence="1">
    <location>
        <begin position="96"/>
        <end position="106"/>
    </location>
</feature>
<feature type="compositionally biased region" description="Polar residues" evidence="1">
    <location>
        <begin position="189"/>
        <end position="201"/>
    </location>
</feature>
<organism>
    <name type="scientific">Ostreid herpesvirus 1 (isolate France)</name>
    <name type="common">OsHV-1</name>
    <name type="synonym">Pacific oyster herpesvirus</name>
    <dbReference type="NCBI Taxonomy" id="654903"/>
    <lineage>
        <taxon>Viruses</taxon>
        <taxon>Duplodnaviria</taxon>
        <taxon>Heunggongvirae</taxon>
        <taxon>Peploviricota</taxon>
        <taxon>Herviviricetes</taxon>
        <taxon>Herpesvirales</taxon>
        <taxon>Malacoherpesviridae</taxon>
        <taxon>Ostreavirus</taxon>
        <taxon>Ostreavirus ostreidmalaco1</taxon>
        <taxon>Ostreid herpesvirus 1</taxon>
    </lineage>
</organism>
<organismHost>
    <name type="scientific">Magallana gigas</name>
    <name type="common">Pacific oyster</name>
    <name type="synonym">Crassostrea gigas</name>
    <dbReference type="NCBI Taxonomy" id="29159"/>
</organismHost>
<organismHost>
    <name type="scientific">Pecten maximus</name>
    <name type="common">King scallop</name>
    <name type="synonym">Pilgrim's clam</name>
    <dbReference type="NCBI Taxonomy" id="6579"/>
</organismHost>